<accession>Q4V8V1</accession>
<reference key="1">
    <citation type="submission" date="2005-06" db="EMBL/GenBank/DDBJ databases">
        <authorList>
            <consortium name="NIH - Zebrafish Gene Collection (ZGC) project"/>
        </authorList>
    </citation>
    <scope>NUCLEOTIDE SEQUENCE [LARGE SCALE MRNA]</scope>
    <source>
        <tissue>Embryo</tissue>
    </source>
</reference>
<evidence type="ECO:0000250" key="1"/>
<evidence type="ECO:0000255" key="2"/>
<evidence type="ECO:0000256" key="3">
    <source>
        <dbReference type="SAM" id="MobiDB-lite"/>
    </source>
</evidence>
<evidence type="ECO:0000305" key="4"/>
<name>BM1LA_DANRE</name>
<sequence length="323" mass="37610">MPVHSREKKESNHEEMEVDFAEQEGSSSEDEDTESSSVSEDGESSEMDDEDCERRRMECIDEMTNLEKQFTDLKDQLYKERLNQVDAKLQEVMSGKAAEYLEPLATLQENMQIRTKVAGIYRELCLESVKNKYDCETQAAFQHWESEKLLLFDTVQTELEEKIRRLEEDRHSIDITSELWNDELQSRKNKKKDPFSPDKKKKPVVVSGPYIVYMLQDLDILEDWTAIRKAMATLGPHRVKTDASSKIDKLQHNARSEDGRLFYDGEWYSRGQAITIDKKDEYPTSAVITTINHDEVWFKRVDGSKSKLYVSQLQKGKYTVKHA</sequence>
<gene>
    <name type="primary">brms1la</name>
    <name type="synonym">brms1l</name>
    <name type="ORF">zgc:114129</name>
</gene>
<dbReference type="EMBL" id="BC097187">
    <property type="protein sequence ID" value="AAH97187.1"/>
    <property type="molecule type" value="mRNA"/>
</dbReference>
<dbReference type="RefSeq" id="NP_001025273.1">
    <property type="nucleotide sequence ID" value="NM_001030102.2"/>
</dbReference>
<dbReference type="SMR" id="Q4V8V1"/>
<dbReference type="FunCoup" id="Q4V8V1">
    <property type="interactions" value="739"/>
</dbReference>
<dbReference type="STRING" id="7955.ENSDARP00000008214"/>
<dbReference type="PaxDb" id="7955-ENSDARP00000008214"/>
<dbReference type="Ensembl" id="ENSDART00000003418">
    <property type="protein sequence ID" value="ENSDARP00000008214"/>
    <property type="gene ID" value="ENSDARG00000006235"/>
</dbReference>
<dbReference type="GeneID" id="792017"/>
<dbReference type="KEGG" id="dre:792017"/>
<dbReference type="AGR" id="ZFIN:ZDB-GENE-050913-49"/>
<dbReference type="CTD" id="792017"/>
<dbReference type="ZFIN" id="ZDB-GENE-050913-49">
    <property type="gene designation" value="brms1la"/>
</dbReference>
<dbReference type="eggNOG" id="KOG4466">
    <property type="taxonomic scope" value="Eukaryota"/>
</dbReference>
<dbReference type="HOGENOM" id="CLU_050862_2_0_1"/>
<dbReference type="InParanoid" id="Q4V8V1"/>
<dbReference type="OMA" id="XIYRELC"/>
<dbReference type="OrthoDB" id="20886at2759"/>
<dbReference type="PhylomeDB" id="Q4V8V1"/>
<dbReference type="TreeFam" id="TF323740"/>
<dbReference type="PRO" id="PR:Q4V8V1"/>
<dbReference type="Proteomes" id="UP000000437">
    <property type="component" value="Chromosome 17"/>
</dbReference>
<dbReference type="Bgee" id="ENSDARG00000006235">
    <property type="expression patterns" value="Expressed in swim bladder and 21 other cell types or tissues"/>
</dbReference>
<dbReference type="ExpressionAtlas" id="Q4V8V1">
    <property type="expression patterns" value="baseline and differential"/>
</dbReference>
<dbReference type="GO" id="GO:0070822">
    <property type="term" value="C:Sin3-type complex"/>
    <property type="evidence" value="ECO:0000318"/>
    <property type="project" value="GO_Central"/>
</dbReference>
<dbReference type="GO" id="GO:0042826">
    <property type="term" value="F:histone deacetylase binding"/>
    <property type="evidence" value="ECO:0000318"/>
    <property type="project" value="GO_Central"/>
</dbReference>
<dbReference type="GO" id="GO:0000122">
    <property type="term" value="P:negative regulation of transcription by RNA polymerase II"/>
    <property type="evidence" value="ECO:0000318"/>
    <property type="project" value="GO_Central"/>
</dbReference>
<dbReference type="FunFam" id="1.20.5.1500:FF:000002">
    <property type="entry name" value="breast cancer metastasis-suppressor 1-like protein-A"/>
    <property type="match status" value="1"/>
</dbReference>
<dbReference type="Gene3D" id="1.20.5.1500">
    <property type="match status" value="1"/>
</dbReference>
<dbReference type="InterPro" id="IPR013907">
    <property type="entry name" value="Sds3"/>
</dbReference>
<dbReference type="PANTHER" id="PTHR21964">
    <property type="entry name" value="BREAST CANCER METASTASIS-SUPPRESSOR 1"/>
    <property type="match status" value="1"/>
</dbReference>
<dbReference type="Pfam" id="PF08598">
    <property type="entry name" value="Sds3"/>
    <property type="match status" value="1"/>
</dbReference>
<dbReference type="SMART" id="SM01401">
    <property type="entry name" value="Sds3"/>
    <property type="match status" value="1"/>
</dbReference>
<protein>
    <recommendedName>
        <fullName>Breast cancer metastasis-suppressor 1-like protein-A</fullName>
    </recommendedName>
</protein>
<comment type="function">
    <text evidence="1">Involved in the histone deacetylase (HDAC1)-dependent transcriptional repression activity.</text>
</comment>
<comment type="subcellular location">
    <subcellularLocation>
        <location evidence="1">Nucleus</location>
    </subcellularLocation>
</comment>
<comment type="similarity">
    <text evidence="4">Belongs to the BRMS1 family.</text>
</comment>
<organism>
    <name type="scientific">Danio rerio</name>
    <name type="common">Zebrafish</name>
    <name type="synonym">Brachydanio rerio</name>
    <dbReference type="NCBI Taxonomy" id="7955"/>
    <lineage>
        <taxon>Eukaryota</taxon>
        <taxon>Metazoa</taxon>
        <taxon>Chordata</taxon>
        <taxon>Craniata</taxon>
        <taxon>Vertebrata</taxon>
        <taxon>Euteleostomi</taxon>
        <taxon>Actinopterygii</taxon>
        <taxon>Neopterygii</taxon>
        <taxon>Teleostei</taxon>
        <taxon>Ostariophysi</taxon>
        <taxon>Cypriniformes</taxon>
        <taxon>Danionidae</taxon>
        <taxon>Danioninae</taxon>
        <taxon>Danio</taxon>
    </lineage>
</organism>
<keyword id="KW-0175">Coiled coil</keyword>
<keyword id="KW-0539">Nucleus</keyword>
<keyword id="KW-1185">Reference proteome</keyword>
<keyword id="KW-0678">Repressor</keyword>
<keyword id="KW-0804">Transcription</keyword>
<keyword id="KW-0805">Transcription regulation</keyword>
<proteinExistence type="evidence at transcript level"/>
<feature type="chain" id="PRO_0000305312" description="Breast cancer metastasis-suppressor 1-like protein-A">
    <location>
        <begin position="1"/>
        <end position="323"/>
    </location>
</feature>
<feature type="region of interest" description="Disordered" evidence="3">
    <location>
        <begin position="1"/>
        <end position="52"/>
    </location>
</feature>
<feature type="coiled-coil region" evidence="2">
    <location>
        <begin position="50"/>
        <end position="81"/>
    </location>
</feature>
<feature type="coiled-coil region" evidence="2">
    <location>
        <begin position="156"/>
        <end position="178"/>
    </location>
</feature>
<feature type="compositionally biased region" description="Basic and acidic residues" evidence="3">
    <location>
        <begin position="1"/>
        <end position="15"/>
    </location>
</feature>
<feature type="compositionally biased region" description="Acidic residues" evidence="3">
    <location>
        <begin position="16"/>
        <end position="51"/>
    </location>
</feature>